<accession>P66887</accession>
<accession>Q8G142</accession>
<accession>Q8YGS4</accession>
<name>TATA_BRUME</name>
<reference key="1">
    <citation type="journal article" date="2002" name="Proc. Natl. Acad. Sci. U.S.A.">
        <title>The genome sequence of the facultative intracellular pathogen Brucella melitensis.</title>
        <authorList>
            <person name="DelVecchio V.G."/>
            <person name="Kapatral V."/>
            <person name="Redkar R.J."/>
            <person name="Patra G."/>
            <person name="Mujer C."/>
            <person name="Los T."/>
            <person name="Ivanova N."/>
            <person name="Anderson I."/>
            <person name="Bhattacharyya A."/>
            <person name="Lykidis A."/>
            <person name="Reznik G."/>
            <person name="Jablonski L."/>
            <person name="Larsen N."/>
            <person name="D'Souza M."/>
            <person name="Bernal A."/>
            <person name="Mazur M."/>
            <person name="Goltsman E."/>
            <person name="Selkov E."/>
            <person name="Elzer P.H."/>
            <person name="Hagius S."/>
            <person name="O'Callaghan D."/>
            <person name="Letesson J.-J."/>
            <person name="Haselkorn R."/>
            <person name="Kyrpides N.C."/>
            <person name="Overbeek R."/>
        </authorList>
    </citation>
    <scope>NUCLEOTIDE SEQUENCE [LARGE SCALE GENOMIC DNA]</scope>
    <source>
        <strain>ATCC 23456 / CCUG 17765 / NCTC 10094 / 16M</strain>
    </source>
</reference>
<gene>
    <name evidence="1" type="primary">tatA</name>
    <name type="ordered locus">BMEI1084</name>
</gene>
<comment type="function">
    <text evidence="1">Part of the twin-arginine translocation (Tat) system that transports large folded proteins containing a characteristic twin-arginine motif in their signal peptide across membranes. TatA could form the protein-conducting channel of the Tat system.</text>
</comment>
<comment type="subunit">
    <text evidence="1">The Tat system comprises two distinct complexes: a TatABC complex, containing multiple copies of TatA, TatB and TatC subunits, and a separate TatA complex, containing only TatA subunits. Substrates initially bind to the TatABC complex, which probably triggers association of the separate TatA complex to form the active translocon.</text>
</comment>
<comment type="subcellular location">
    <subcellularLocation>
        <location evidence="1">Cell inner membrane</location>
        <topology evidence="1">Single-pass membrane protein</topology>
    </subcellularLocation>
</comment>
<comment type="similarity">
    <text evidence="1">Belongs to the TatA/E family.</text>
</comment>
<protein>
    <recommendedName>
        <fullName evidence="1">Sec-independent protein translocase protein TatA</fullName>
    </recommendedName>
</protein>
<dbReference type="EMBL" id="AE008917">
    <property type="protein sequence ID" value="AAL52265.1"/>
    <property type="molecule type" value="Genomic_DNA"/>
</dbReference>
<dbReference type="PIR" id="AF3387">
    <property type="entry name" value="AF3387"/>
</dbReference>
<dbReference type="RefSeq" id="WP_002964012.1">
    <property type="nucleotide sequence ID" value="NZ_GG703778.1"/>
</dbReference>
<dbReference type="SMR" id="P66887"/>
<dbReference type="KEGG" id="bme:BMEI1084"/>
<dbReference type="KEGG" id="bmel:DK63_328"/>
<dbReference type="PATRIC" id="fig|224914.52.peg.339"/>
<dbReference type="eggNOG" id="COG1826">
    <property type="taxonomic scope" value="Bacteria"/>
</dbReference>
<dbReference type="Proteomes" id="UP000000419">
    <property type="component" value="Chromosome I"/>
</dbReference>
<dbReference type="GO" id="GO:0033281">
    <property type="term" value="C:TAT protein transport complex"/>
    <property type="evidence" value="ECO:0007669"/>
    <property type="project" value="UniProtKB-UniRule"/>
</dbReference>
<dbReference type="GO" id="GO:0008320">
    <property type="term" value="F:protein transmembrane transporter activity"/>
    <property type="evidence" value="ECO:0007669"/>
    <property type="project" value="UniProtKB-UniRule"/>
</dbReference>
<dbReference type="GO" id="GO:0043953">
    <property type="term" value="P:protein transport by the Tat complex"/>
    <property type="evidence" value="ECO:0007669"/>
    <property type="project" value="UniProtKB-UniRule"/>
</dbReference>
<dbReference type="Gene3D" id="1.20.5.3310">
    <property type="match status" value="1"/>
</dbReference>
<dbReference type="HAMAP" id="MF_00236">
    <property type="entry name" value="TatA_E"/>
    <property type="match status" value="1"/>
</dbReference>
<dbReference type="InterPro" id="IPR003369">
    <property type="entry name" value="TatA/B/E"/>
</dbReference>
<dbReference type="InterPro" id="IPR006312">
    <property type="entry name" value="TatA/E"/>
</dbReference>
<dbReference type="NCBIfam" id="NF001940">
    <property type="entry name" value="PRK00720.1"/>
    <property type="match status" value="1"/>
</dbReference>
<dbReference type="NCBIfam" id="TIGR01411">
    <property type="entry name" value="tatAE"/>
    <property type="match status" value="1"/>
</dbReference>
<dbReference type="PANTHER" id="PTHR42982">
    <property type="entry name" value="SEC-INDEPENDENT PROTEIN TRANSLOCASE PROTEIN TATA"/>
    <property type="match status" value="1"/>
</dbReference>
<dbReference type="PANTHER" id="PTHR42982:SF1">
    <property type="entry name" value="SEC-INDEPENDENT PROTEIN TRANSLOCASE PROTEIN TATA"/>
    <property type="match status" value="1"/>
</dbReference>
<dbReference type="Pfam" id="PF02416">
    <property type="entry name" value="TatA_B_E"/>
    <property type="match status" value="1"/>
</dbReference>
<evidence type="ECO:0000255" key="1">
    <source>
        <dbReference type="HAMAP-Rule" id="MF_00236"/>
    </source>
</evidence>
<evidence type="ECO:0000256" key="2">
    <source>
        <dbReference type="SAM" id="MobiDB-lite"/>
    </source>
</evidence>
<organism>
    <name type="scientific">Brucella melitensis biotype 1 (strain ATCC 23456 / CCUG 17765 / NCTC 10094 / 16M)</name>
    <dbReference type="NCBI Taxonomy" id="224914"/>
    <lineage>
        <taxon>Bacteria</taxon>
        <taxon>Pseudomonadati</taxon>
        <taxon>Pseudomonadota</taxon>
        <taxon>Alphaproteobacteria</taxon>
        <taxon>Hyphomicrobiales</taxon>
        <taxon>Brucellaceae</taxon>
        <taxon>Brucella/Ochrobactrum group</taxon>
        <taxon>Brucella</taxon>
    </lineage>
</organism>
<keyword id="KW-0997">Cell inner membrane</keyword>
<keyword id="KW-1003">Cell membrane</keyword>
<keyword id="KW-0472">Membrane</keyword>
<keyword id="KW-0653">Protein transport</keyword>
<keyword id="KW-0811">Translocation</keyword>
<keyword id="KW-0812">Transmembrane</keyword>
<keyword id="KW-1133">Transmembrane helix</keyword>
<keyword id="KW-0813">Transport</keyword>
<sequence length="72" mass="7999">MGSFSIWHWLIVLAVVLLLFGRGKIPELMGDVAKGIKNFKQGMADEDAKEDPRTIDAKAEEPVKDVKKTTKS</sequence>
<proteinExistence type="inferred from homology"/>
<feature type="chain" id="PRO_0000097930" description="Sec-independent protein translocase protein TatA">
    <location>
        <begin position="1"/>
        <end position="72"/>
    </location>
</feature>
<feature type="transmembrane region" description="Helical" evidence="1">
    <location>
        <begin position="1"/>
        <end position="21"/>
    </location>
</feature>
<feature type="region of interest" description="Disordered" evidence="2">
    <location>
        <begin position="43"/>
        <end position="72"/>
    </location>
</feature>
<feature type="compositionally biased region" description="Basic and acidic residues" evidence="2">
    <location>
        <begin position="50"/>
        <end position="72"/>
    </location>
</feature>